<accession>Q0TRD5</accession>
<name>MUTL_CLOP1</name>
<gene>
    <name evidence="1" type="primary">mutL</name>
    <name type="ordered locus">CPF_1359</name>
</gene>
<keyword id="KW-0227">DNA damage</keyword>
<keyword id="KW-0234">DNA repair</keyword>
<reference key="1">
    <citation type="journal article" date="2006" name="Genome Res.">
        <title>Skewed genomic variability in strains of the toxigenic bacterial pathogen, Clostridium perfringens.</title>
        <authorList>
            <person name="Myers G.S.A."/>
            <person name="Rasko D.A."/>
            <person name="Cheung J.K."/>
            <person name="Ravel J."/>
            <person name="Seshadri R."/>
            <person name="DeBoy R.T."/>
            <person name="Ren Q."/>
            <person name="Varga J."/>
            <person name="Awad M.M."/>
            <person name="Brinkac L.M."/>
            <person name="Daugherty S.C."/>
            <person name="Haft D.H."/>
            <person name="Dodson R.J."/>
            <person name="Madupu R."/>
            <person name="Nelson W.C."/>
            <person name="Rosovitz M.J."/>
            <person name="Sullivan S.A."/>
            <person name="Khouri H."/>
            <person name="Dimitrov G.I."/>
            <person name="Watkins K.L."/>
            <person name="Mulligan S."/>
            <person name="Benton J."/>
            <person name="Radune D."/>
            <person name="Fisher D.J."/>
            <person name="Atkins H.S."/>
            <person name="Hiscox T."/>
            <person name="Jost B.H."/>
            <person name="Billington S.J."/>
            <person name="Songer J.G."/>
            <person name="McClane B.A."/>
            <person name="Titball R.W."/>
            <person name="Rood J.I."/>
            <person name="Melville S.B."/>
            <person name="Paulsen I.T."/>
        </authorList>
    </citation>
    <scope>NUCLEOTIDE SEQUENCE [LARGE SCALE GENOMIC DNA]</scope>
    <source>
        <strain>ATCC 13124 / DSM 756 / JCM 1290 / NCIMB 6125 / NCTC 8237 / S 107 / Type A</strain>
    </source>
</reference>
<feature type="chain" id="PRO_1000010008" description="DNA mismatch repair protein MutL">
    <location>
        <begin position="1"/>
        <end position="674"/>
    </location>
</feature>
<organism>
    <name type="scientific">Clostridium perfringens (strain ATCC 13124 / DSM 756 / JCM 1290 / NCIMB 6125 / NCTC 8237 / Type A)</name>
    <dbReference type="NCBI Taxonomy" id="195103"/>
    <lineage>
        <taxon>Bacteria</taxon>
        <taxon>Bacillati</taxon>
        <taxon>Bacillota</taxon>
        <taxon>Clostridia</taxon>
        <taxon>Eubacteriales</taxon>
        <taxon>Clostridiaceae</taxon>
        <taxon>Clostridium</taxon>
    </lineage>
</organism>
<comment type="function">
    <text evidence="1">This protein is involved in the repair of mismatches in DNA. It is required for dam-dependent methyl-directed DNA mismatch repair. May act as a 'molecular matchmaker', a protein that promotes the formation of a stable complex between two or more DNA-binding proteins in an ATP-dependent manner without itself being part of a final effector complex.</text>
</comment>
<comment type="similarity">
    <text evidence="1">Belongs to the DNA mismatch repair MutL/HexB family.</text>
</comment>
<dbReference type="EMBL" id="CP000246">
    <property type="protein sequence ID" value="ABG84383.1"/>
    <property type="molecule type" value="Genomic_DNA"/>
</dbReference>
<dbReference type="RefSeq" id="WP_011590677.1">
    <property type="nucleotide sequence ID" value="NC_008261.1"/>
</dbReference>
<dbReference type="SMR" id="Q0TRD5"/>
<dbReference type="STRING" id="195103.CPF_1359"/>
<dbReference type="PaxDb" id="195103-CPF_1359"/>
<dbReference type="GeneID" id="93002323"/>
<dbReference type="KEGG" id="cpf:CPF_1359"/>
<dbReference type="eggNOG" id="COG0323">
    <property type="taxonomic scope" value="Bacteria"/>
</dbReference>
<dbReference type="HOGENOM" id="CLU_004131_4_1_9"/>
<dbReference type="Proteomes" id="UP000001823">
    <property type="component" value="Chromosome"/>
</dbReference>
<dbReference type="GO" id="GO:0032300">
    <property type="term" value="C:mismatch repair complex"/>
    <property type="evidence" value="ECO:0007669"/>
    <property type="project" value="InterPro"/>
</dbReference>
<dbReference type="GO" id="GO:0005524">
    <property type="term" value="F:ATP binding"/>
    <property type="evidence" value="ECO:0007669"/>
    <property type="project" value="InterPro"/>
</dbReference>
<dbReference type="GO" id="GO:0016887">
    <property type="term" value="F:ATP hydrolysis activity"/>
    <property type="evidence" value="ECO:0007669"/>
    <property type="project" value="InterPro"/>
</dbReference>
<dbReference type="GO" id="GO:0140664">
    <property type="term" value="F:ATP-dependent DNA damage sensor activity"/>
    <property type="evidence" value="ECO:0007669"/>
    <property type="project" value="InterPro"/>
</dbReference>
<dbReference type="GO" id="GO:0030983">
    <property type="term" value="F:mismatched DNA binding"/>
    <property type="evidence" value="ECO:0007669"/>
    <property type="project" value="InterPro"/>
</dbReference>
<dbReference type="GO" id="GO:0006298">
    <property type="term" value="P:mismatch repair"/>
    <property type="evidence" value="ECO:0007669"/>
    <property type="project" value="UniProtKB-UniRule"/>
</dbReference>
<dbReference type="CDD" id="cd16926">
    <property type="entry name" value="HATPase_MutL-MLH-PMS-like"/>
    <property type="match status" value="1"/>
</dbReference>
<dbReference type="CDD" id="cd00782">
    <property type="entry name" value="MutL_Trans"/>
    <property type="match status" value="1"/>
</dbReference>
<dbReference type="FunFam" id="3.30.565.10:FF:000003">
    <property type="entry name" value="DNA mismatch repair endonuclease MutL"/>
    <property type="match status" value="1"/>
</dbReference>
<dbReference type="Gene3D" id="3.30.230.10">
    <property type="match status" value="1"/>
</dbReference>
<dbReference type="Gene3D" id="3.30.565.10">
    <property type="entry name" value="Histidine kinase-like ATPase, C-terminal domain"/>
    <property type="match status" value="1"/>
</dbReference>
<dbReference type="Gene3D" id="3.30.1540.20">
    <property type="entry name" value="MutL, C-terminal domain, dimerisation subdomain"/>
    <property type="match status" value="1"/>
</dbReference>
<dbReference type="Gene3D" id="3.30.1370.100">
    <property type="entry name" value="MutL, C-terminal domain, regulatory subdomain"/>
    <property type="match status" value="1"/>
</dbReference>
<dbReference type="HAMAP" id="MF_00149">
    <property type="entry name" value="DNA_mis_repair"/>
    <property type="match status" value="1"/>
</dbReference>
<dbReference type="InterPro" id="IPR014762">
    <property type="entry name" value="DNA_mismatch_repair_CS"/>
</dbReference>
<dbReference type="InterPro" id="IPR020667">
    <property type="entry name" value="DNA_mismatch_repair_MutL"/>
</dbReference>
<dbReference type="InterPro" id="IPR013507">
    <property type="entry name" value="DNA_mismatch_S5_2-like"/>
</dbReference>
<dbReference type="InterPro" id="IPR036890">
    <property type="entry name" value="HATPase_C_sf"/>
</dbReference>
<dbReference type="InterPro" id="IPR002099">
    <property type="entry name" value="MutL/Mlh/PMS"/>
</dbReference>
<dbReference type="InterPro" id="IPR038973">
    <property type="entry name" value="MutL/Mlh/Pms-like"/>
</dbReference>
<dbReference type="InterPro" id="IPR014790">
    <property type="entry name" value="MutL_C"/>
</dbReference>
<dbReference type="InterPro" id="IPR042120">
    <property type="entry name" value="MutL_C_dimsub"/>
</dbReference>
<dbReference type="InterPro" id="IPR042121">
    <property type="entry name" value="MutL_C_regsub"/>
</dbReference>
<dbReference type="InterPro" id="IPR037198">
    <property type="entry name" value="MutL_C_sf"/>
</dbReference>
<dbReference type="InterPro" id="IPR020568">
    <property type="entry name" value="Ribosomal_Su5_D2-typ_SF"/>
</dbReference>
<dbReference type="InterPro" id="IPR014721">
    <property type="entry name" value="Ribsml_uS5_D2-typ_fold_subgr"/>
</dbReference>
<dbReference type="NCBIfam" id="TIGR00585">
    <property type="entry name" value="mutl"/>
    <property type="match status" value="1"/>
</dbReference>
<dbReference type="PANTHER" id="PTHR10073">
    <property type="entry name" value="DNA MISMATCH REPAIR PROTEIN MLH, PMS, MUTL"/>
    <property type="match status" value="1"/>
</dbReference>
<dbReference type="PANTHER" id="PTHR10073:SF12">
    <property type="entry name" value="DNA MISMATCH REPAIR PROTEIN MLH1"/>
    <property type="match status" value="1"/>
</dbReference>
<dbReference type="Pfam" id="PF01119">
    <property type="entry name" value="DNA_mis_repair"/>
    <property type="match status" value="1"/>
</dbReference>
<dbReference type="Pfam" id="PF13589">
    <property type="entry name" value="HATPase_c_3"/>
    <property type="match status" value="1"/>
</dbReference>
<dbReference type="Pfam" id="PF08676">
    <property type="entry name" value="MutL_C"/>
    <property type="match status" value="1"/>
</dbReference>
<dbReference type="SMART" id="SM01340">
    <property type="entry name" value="DNA_mis_repair"/>
    <property type="match status" value="1"/>
</dbReference>
<dbReference type="SMART" id="SM00853">
    <property type="entry name" value="MutL_C"/>
    <property type="match status" value="1"/>
</dbReference>
<dbReference type="SUPFAM" id="SSF55874">
    <property type="entry name" value="ATPase domain of HSP90 chaperone/DNA topoisomerase II/histidine kinase"/>
    <property type="match status" value="1"/>
</dbReference>
<dbReference type="SUPFAM" id="SSF118116">
    <property type="entry name" value="DNA mismatch repair protein MutL"/>
    <property type="match status" value="1"/>
</dbReference>
<dbReference type="SUPFAM" id="SSF54211">
    <property type="entry name" value="Ribosomal protein S5 domain 2-like"/>
    <property type="match status" value="1"/>
</dbReference>
<dbReference type="PROSITE" id="PS00058">
    <property type="entry name" value="DNA_MISMATCH_REPAIR_1"/>
    <property type="match status" value="1"/>
</dbReference>
<evidence type="ECO:0000255" key="1">
    <source>
        <dbReference type="HAMAP-Rule" id="MF_00149"/>
    </source>
</evidence>
<proteinExistence type="inferred from homology"/>
<protein>
    <recommendedName>
        <fullName evidence="1">DNA mismatch repair protein MutL</fullName>
    </recommendedName>
</protein>
<sequence>MNRINILNADTANKIAAGEVVERPSSVVKELVENSLDAGAKNITIEIQNGGESLIKIIDDGSGVHPEDVEKAFNPHATSKIKDTYDIFSINTLGFRGEALPSIASIARVDFKSKVSDFDMGKELVISGGEKESLTDCSMNRGTQIEVRDLFFNVPARKKFLKTTARESALINDLVNRISLANPDVSFKLFNNNKKILNTYGNGKLIDVIRTIYGKSTAENLIYFEEHKDTASVYGFIGNDTLARASRNNQSLFVNKRYVKNRSLTVAVENAFRSFNVTGKFPFFVLFIDTYPELIDVNIHPTKSEIKFKDERFIFKVVFDAVHSAMREYVKDTFTLPEEEEKKFEALKEEVIQESLDEEISTLEKLKENINYKVSEDRKKEEIYSYNPSKDYEAKTEVNIPVDFLSKENQEESFSINNSLENNNFKEGSAKREISYDPILIKNELKDKVSESTSESLERSDYKCNKNEYGNSIEEIIYREAKFPKLRVIGQFNKTYILAEYDSTLYLIDQHAAHEKILFEKYSSDIAKKRVEIQPLMIPLVVTLPTEDYLYYDENKEIFEKAGFKISDFGDNSIRIEEVPYFLDKLNPTELITSMINNLKKMGTGETVEVKYNKIASMSCRAAVKANDVLSILEMENLIEDLRYINDPFHCPHGRPTIIKFTSYELDKKFKRIT</sequence>